<keyword id="KW-0963">Cytoplasm</keyword>
<keyword id="KW-0444">Lipid biosynthesis</keyword>
<keyword id="KW-0443">Lipid metabolism</keyword>
<keyword id="KW-0520">NAD</keyword>
<keyword id="KW-0521">NADP</keyword>
<keyword id="KW-0547">Nucleotide-binding</keyword>
<keyword id="KW-0560">Oxidoreductase</keyword>
<keyword id="KW-0594">Phospholipid biosynthesis</keyword>
<keyword id="KW-1208">Phospholipid metabolism</keyword>
<keyword id="KW-1185">Reference proteome</keyword>
<name>GPDA_CORK4</name>
<feature type="chain" id="PRO_1000205854" description="Glycerol-3-phosphate dehydrogenase [NAD(P)+]">
    <location>
        <begin position="1"/>
        <end position="332"/>
    </location>
</feature>
<feature type="active site" description="Proton acceptor" evidence="1">
    <location>
        <position position="191"/>
    </location>
</feature>
<feature type="binding site" evidence="1">
    <location>
        <position position="11"/>
    </location>
    <ligand>
        <name>NADPH</name>
        <dbReference type="ChEBI" id="CHEBI:57783"/>
    </ligand>
</feature>
<feature type="binding site" evidence="1">
    <location>
        <position position="12"/>
    </location>
    <ligand>
        <name>NADPH</name>
        <dbReference type="ChEBI" id="CHEBI:57783"/>
    </ligand>
</feature>
<feature type="binding site" evidence="1">
    <location>
        <position position="32"/>
    </location>
    <ligand>
        <name>NADPH</name>
        <dbReference type="ChEBI" id="CHEBI:57783"/>
    </ligand>
</feature>
<feature type="binding site" evidence="1">
    <location>
        <position position="33"/>
    </location>
    <ligand>
        <name>NADPH</name>
        <dbReference type="ChEBI" id="CHEBI:57783"/>
    </ligand>
</feature>
<feature type="binding site" evidence="1">
    <location>
        <position position="106"/>
    </location>
    <ligand>
        <name>NADPH</name>
        <dbReference type="ChEBI" id="CHEBI:57783"/>
    </ligand>
</feature>
<feature type="binding site" evidence="1">
    <location>
        <position position="106"/>
    </location>
    <ligand>
        <name>sn-glycerol 3-phosphate</name>
        <dbReference type="ChEBI" id="CHEBI:57597"/>
    </ligand>
</feature>
<feature type="binding site" evidence="1">
    <location>
        <position position="136"/>
    </location>
    <ligand>
        <name>sn-glycerol 3-phosphate</name>
        <dbReference type="ChEBI" id="CHEBI:57597"/>
    </ligand>
</feature>
<feature type="binding site" evidence="1">
    <location>
        <position position="140"/>
    </location>
    <ligand>
        <name>NADPH</name>
        <dbReference type="ChEBI" id="CHEBI:57783"/>
    </ligand>
</feature>
<feature type="binding site" evidence="1">
    <location>
        <position position="191"/>
    </location>
    <ligand>
        <name>sn-glycerol 3-phosphate</name>
        <dbReference type="ChEBI" id="CHEBI:57597"/>
    </ligand>
</feature>
<feature type="binding site" evidence="1">
    <location>
        <position position="244"/>
    </location>
    <ligand>
        <name>sn-glycerol 3-phosphate</name>
        <dbReference type="ChEBI" id="CHEBI:57597"/>
    </ligand>
</feature>
<feature type="binding site" evidence="1">
    <location>
        <position position="254"/>
    </location>
    <ligand>
        <name>sn-glycerol 3-phosphate</name>
        <dbReference type="ChEBI" id="CHEBI:57597"/>
    </ligand>
</feature>
<feature type="binding site" evidence="1">
    <location>
        <position position="255"/>
    </location>
    <ligand>
        <name>NADPH</name>
        <dbReference type="ChEBI" id="CHEBI:57783"/>
    </ligand>
</feature>
<feature type="binding site" evidence="1">
    <location>
        <position position="255"/>
    </location>
    <ligand>
        <name>sn-glycerol 3-phosphate</name>
        <dbReference type="ChEBI" id="CHEBI:57597"/>
    </ligand>
</feature>
<feature type="binding site" evidence="1">
    <location>
        <position position="256"/>
    </location>
    <ligand>
        <name>sn-glycerol 3-phosphate</name>
        <dbReference type="ChEBI" id="CHEBI:57597"/>
    </ligand>
</feature>
<feature type="binding site" evidence="1">
    <location>
        <position position="280"/>
    </location>
    <ligand>
        <name>NADPH</name>
        <dbReference type="ChEBI" id="CHEBI:57783"/>
    </ligand>
</feature>
<feature type="binding site" evidence="1">
    <location>
        <position position="282"/>
    </location>
    <ligand>
        <name>NADPH</name>
        <dbReference type="ChEBI" id="CHEBI:57783"/>
    </ligand>
</feature>
<reference key="1">
    <citation type="journal article" date="2008" name="J. Biotechnol.">
        <title>Ultrafast pyrosequencing of Corynebacterium kroppenstedtii DSM44385 revealed insights into the physiology of a lipophilic corynebacterium that lacks mycolic acids.</title>
        <authorList>
            <person name="Tauch A."/>
            <person name="Schneider J."/>
            <person name="Szczepanowski R."/>
            <person name="Tilker A."/>
            <person name="Viehoever P."/>
            <person name="Gartemann K.-H."/>
            <person name="Arnold W."/>
            <person name="Blom J."/>
            <person name="Brinkrolf K."/>
            <person name="Brune I."/>
            <person name="Goetker S."/>
            <person name="Weisshaar B."/>
            <person name="Goesmann A."/>
            <person name="Droege M."/>
            <person name="Puehler A."/>
        </authorList>
    </citation>
    <scope>NUCLEOTIDE SEQUENCE [LARGE SCALE GENOMIC DNA]</scope>
    <source>
        <strain>DSM 44385 / JCM 11950 / CIP 105744 / CCUG 35717</strain>
    </source>
</reference>
<accession>C4LJE8</accession>
<comment type="function">
    <text evidence="1">Catalyzes the reduction of the glycolytic intermediate dihydroxyacetone phosphate (DHAP) to sn-glycerol 3-phosphate (G3P), the key precursor for phospholipid synthesis.</text>
</comment>
<comment type="catalytic activity">
    <reaction evidence="1">
        <text>sn-glycerol 3-phosphate + NAD(+) = dihydroxyacetone phosphate + NADH + H(+)</text>
        <dbReference type="Rhea" id="RHEA:11092"/>
        <dbReference type="ChEBI" id="CHEBI:15378"/>
        <dbReference type="ChEBI" id="CHEBI:57540"/>
        <dbReference type="ChEBI" id="CHEBI:57597"/>
        <dbReference type="ChEBI" id="CHEBI:57642"/>
        <dbReference type="ChEBI" id="CHEBI:57945"/>
        <dbReference type="EC" id="1.1.1.94"/>
    </reaction>
    <physiologicalReaction direction="right-to-left" evidence="1">
        <dbReference type="Rhea" id="RHEA:11094"/>
    </physiologicalReaction>
</comment>
<comment type="catalytic activity">
    <reaction evidence="1">
        <text>sn-glycerol 3-phosphate + NADP(+) = dihydroxyacetone phosphate + NADPH + H(+)</text>
        <dbReference type="Rhea" id="RHEA:11096"/>
        <dbReference type="ChEBI" id="CHEBI:15378"/>
        <dbReference type="ChEBI" id="CHEBI:57597"/>
        <dbReference type="ChEBI" id="CHEBI:57642"/>
        <dbReference type="ChEBI" id="CHEBI:57783"/>
        <dbReference type="ChEBI" id="CHEBI:58349"/>
        <dbReference type="EC" id="1.1.1.94"/>
    </reaction>
    <physiologicalReaction direction="right-to-left" evidence="1">
        <dbReference type="Rhea" id="RHEA:11098"/>
    </physiologicalReaction>
</comment>
<comment type="pathway">
    <text evidence="1">Membrane lipid metabolism; glycerophospholipid metabolism.</text>
</comment>
<comment type="subcellular location">
    <subcellularLocation>
        <location evidence="1">Cytoplasm</location>
    </subcellularLocation>
</comment>
<comment type="similarity">
    <text evidence="1">Belongs to the NAD-dependent glycerol-3-phosphate dehydrogenase family.</text>
</comment>
<proteinExistence type="inferred from homology"/>
<protein>
    <recommendedName>
        <fullName evidence="1">Glycerol-3-phosphate dehydrogenase [NAD(P)+]</fullName>
        <ecNumber evidence="1">1.1.1.94</ecNumber>
    </recommendedName>
    <alternativeName>
        <fullName evidence="1">NAD(P)(+)-dependent glycerol-3-phosphate dehydrogenase</fullName>
    </alternativeName>
    <alternativeName>
        <fullName evidence="1">NAD(P)H-dependent dihydroxyacetone-phosphate reductase</fullName>
    </alternativeName>
</protein>
<organism>
    <name type="scientific">Corynebacterium kroppenstedtii (strain DSM 44385 / JCM 11950 / CIP 105744 / CCUG 35717)</name>
    <dbReference type="NCBI Taxonomy" id="645127"/>
    <lineage>
        <taxon>Bacteria</taxon>
        <taxon>Bacillati</taxon>
        <taxon>Actinomycetota</taxon>
        <taxon>Actinomycetes</taxon>
        <taxon>Mycobacteriales</taxon>
        <taxon>Corynebacteriaceae</taxon>
        <taxon>Corynebacterium</taxon>
    </lineage>
</organism>
<gene>
    <name evidence="1" type="primary">gpsA</name>
    <name type="ordered locus">ckrop_1209</name>
</gene>
<sequence length="332" mass="34851">MVAVAVMGAGSWGTTMTKVFADAGNTVRLWARRDEVADEIQSTRRNQCYLPGVVIPDAVTATSDPRVALTDADIVVLGVPSHAVRDSLTRWRDFLPDDALIVSLPKGLERDTARRMSEVIAEASGRPSEKIAVLSGPNLAKEVADEQPAATVVACTDHDSAKRVQEACTTAYFRPYTNTDVIGCEIGGVAKNVIALAAGMAAGQNLGFNTAATIITRGLAETVRLGTALGANPATFSGLAGLGDLVATCNSPLSRNRTFGEHLSQGMSLEEAQEACHGQVAEGVNACRAIQSLARAHSVDVPIADAVVSVCFDGATVKESIMNLMERDTKAE</sequence>
<dbReference type="EC" id="1.1.1.94" evidence="1"/>
<dbReference type="EMBL" id="CP001620">
    <property type="protein sequence ID" value="ACR17953.1"/>
    <property type="molecule type" value="Genomic_DNA"/>
</dbReference>
<dbReference type="RefSeq" id="WP_012731840.1">
    <property type="nucleotide sequence ID" value="NC_012704.1"/>
</dbReference>
<dbReference type="SMR" id="C4LJE8"/>
<dbReference type="STRING" id="645127.ckrop_1209"/>
<dbReference type="KEGG" id="ckp:ckrop_1209"/>
<dbReference type="eggNOG" id="COG0240">
    <property type="taxonomic scope" value="Bacteria"/>
</dbReference>
<dbReference type="HOGENOM" id="CLU_033449_0_2_11"/>
<dbReference type="OrthoDB" id="9812273at2"/>
<dbReference type="UniPathway" id="UPA00940"/>
<dbReference type="Proteomes" id="UP000001473">
    <property type="component" value="Chromosome"/>
</dbReference>
<dbReference type="GO" id="GO:0005829">
    <property type="term" value="C:cytosol"/>
    <property type="evidence" value="ECO:0007669"/>
    <property type="project" value="TreeGrafter"/>
</dbReference>
<dbReference type="GO" id="GO:0047952">
    <property type="term" value="F:glycerol-3-phosphate dehydrogenase [NAD(P)+] activity"/>
    <property type="evidence" value="ECO:0007669"/>
    <property type="project" value="UniProtKB-UniRule"/>
</dbReference>
<dbReference type="GO" id="GO:0051287">
    <property type="term" value="F:NAD binding"/>
    <property type="evidence" value="ECO:0007669"/>
    <property type="project" value="InterPro"/>
</dbReference>
<dbReference type="GO" id="GO:0005975">
    <property type="term" value="P:carbohydrate metabolic process"/>
    <property type="evidence" value="ECO:0007669"/>
    <property type="project" value="InterPro"/>
</dbReference>
<dbReference type="GO" id="GO:0046167">
    <property type="term" value="P:glycerol-3-phosphate biosynthetic process"/>
    <property type="evidence" value="ECO:0007669"/>
    <property type="project" value="UniProtKB-UniRule"/>
</dbReference>
<dbReference type="GO" id="GO:0046168">
    <property type="term" value="P:glycerol-3-phosphate catabolic process"/>
    <property type="evidence" value="ECO:0007669"/>
    <property type="project" value="InterPro"/>
</dbReference>
<dbReference type="GO" id="GO:0006650">
    <property type="term" value="P:glycerophospholipid metabolic process"/>
    <property type="evidence" value="ECO:0007669"/>
    <property type="project" value="UniProtKB-UniRule"/>
</dbReference>
<dbReference type="GO" id="GO:0008654">
    <property type="term" value="P:phospholipid biosynthetic process"/>
    <property type="evidence" value="ECO:0007669"/>
    <property type="project" value="UniProtKB-KW"/>
</dbReference>
<dbReference type="FunFam" id="1.10.1040.10:FF:000001">
    <property type="entry name" value="Glycerol-3-phosphate dehydrogenase [NAD(P)+]"/>
    <property type="match status" value="1"/>
</dbReference>
<dbReference type="FunFam" id="3.40.50.720:FF:000019">
    <property type="entry name" value="Glycerol-3-phosphate dehydrogenase [NAD(P)+]"/>
    <property type="match status" value="1"/>
</dbReference>
<dbReference type="Gene3D" id="1.10.1040.10">
    <property type="entry name" value="N-(1-d-carboxylethyl)-l-norvaline Dehydrogenase, domain 2"/>
    <property type="match status" value="1"/>
</dbReference>
<dbReference type="Gene3D" id="3.40.50.720">
    <property type="entry name" value="NAD(P)-binding Rossmann-like Domain"/>
    <property type="match status" value="1"/>
</dbReference>
<dbReference type="HAMAP" id="MF_00394">
    <property type="entry name" value="NAD_Glyc3P_dehydrog"/>
    <property type="match status" value="1"/>
</dbReference>
<dbReference type="InterPro" id="IPR008927">
    <property type="entry name" value="6-PGluconate_DH-like_C_sf"/>
</dbReference>
<dbReference type="InterPro" id="IPR013328">
    <property type="entry name" value="6PGD_dom2"/>
</dbReference>
<dbReference type="InterPro" id="IPR006168">
    <property type="entry name" value="G3P_DH_NAD-dep"/>
</dbReference>
<dbReference type="InterPro" id="IPR006109">
    <property type="entry name" value="G3P_DH_NAD-dep_C"/>
</dbReference>
<dbReference type="InterPro" id="IPR011128">
    <property type="entry name" value="G3P_DH_NAD-dep_N"/>
</dbReference>
<dbReference type="InterPro" id="IPR036291">
    <property type="entry name" value="NAD(P)-bd_dom_sf"/>
</dbReference>
<dbReference type="NCBIfam" id="NF000940">
    <property type="entry name" value="PRK00094.1-2"/>
    <property type="match status" value="1"/>
</dbReference>
<dbReference type="NCBIfam" id="NF000942">
    <property type="entry name" value="PRK00094.1-4"/>
    <property type="match status" value="1"/>
</dbReference>
<dbReference type="PANTHER" id="PTHR11728">
    <property type="entry name" value="GLYCEROL-3-PHOSPHATE DEHYDROGENASE"/>
    <property type="match status" value="1"/>
</dbReference>
<dbReference type="PANTHER" id="PTHR11728:SF1">
    <property type="entry name" value="GLYCEROL-3-PHOSPHATE DEHYDROGENASE [NAD(+)] 2, CHLOROPLASTIC"/>
    <property type="match status" value="1"/>
</dbReference>
<dbReference type="Pfam" id="PF07479">
    <property type="entry name" value="NAD_Gly3P_dh_C"/>
    <property type="match status" value="1"/>
</dbReference>
<dbReference type="Pfam" id="PF01210">
    <property type="entry name" value="NAD_Gly3P_dh_N"/>
    <property type="match status" value="1"/>
</dbReference>
<dbReference type="PIRSF" id="PIRSF000114">
    <property type="entry name" value="Glycerol-3-P_dh"/>
    <property type="match status" value="1"/>
</dbReference>
<dbReference type="PRINTS" id="PR00077">
    <property type="entry name" value="GPDHDRGNASE"/>
</dbReference>
<dbReference type="SUPFAM" id="SSF48179">
    <property type="entry name" value="6-phosphogluconate dehydrogenase C-terminal domain-like"/>
    <property type="match status" value="1"/>
</dbReference>
<dbReference type="SUPFAM" id="SSF51735">
    <property type="entry name" value="NAD(P)-binding Rossmann-fold domains"/>
    <property type="match status" value="1"/>
</dbReference>
<dbReference type="PROSITE" id="PS00957">
    <property type="entry name" value="NAD_G3PDH"/>
    <property type="match status" value="1"/>
</dbReference>
<evidence type="ECO:0000255" key="1">
    <source>
        <dbReference type="HAMAP-Rule" id="MF_00394"/>
    </source>
</evidence>